<sequence length="118" mass="12345">MKIVALTLVAFVALAGASCPYAAPAQAYSAPAAPSGYPAPPCPTNYLFSCQPNLAPAPCAQEAQAPAYGSAGAYTEQVPRYVGSPNREQVQQFHQRIGMAALMEELRGLGQGIQGQQY</sequence>
<dbReference type="EMBL" id="EF441683">
    <property type="protein sequence ID" value="ABO71724.1"/>
    <property type="molecule type" value="Genomic_DNA"/>
</dbReference>
<dbReference type="EMBL" id="CH480818">
    <property type="protein sequence ID" value="EDW52575.1"/>
    <property type="molecule type" value="Genomic_DNA"/>
</dbReference>
<dbReference type="STRING" id="7238.A4UM15"/>
<dbReference type="EnsemblMetazoa" id="FBtr0194092">
    <property type="protein sequence ID" value="FBpp0192584"/>
    <property type="gene ID" value="FBgn0166052"/>
</dbReference>
<dbReference type="EnsemblMetazoa" id="XM_002036616.2">
    <property type="protein sequence ID" value="XP_002036652.1"/>
    <property type="gene ID" value="LOC6612135"/>
</dbReference>
<dbReference type="GeneID" id="6612135"/>
<dbReference type="KEGG" id="dse:6612135"/>
<dbReference type="CTD" id="34558"/>
<dbReference type="HOGENOM" id="CLU_169196_0_0_1"/>
<dbReference type="OMA" id="CAQEAQA"/>
<dbReference type="OrthoDB" id="56088at7215"/>
<dbReference type="PhylomeDB" id="A4UM15"/>
<dbReference type="Proteomes" id="UP000001292">
    <property type="component" value="Unassembled WGS sequence"/>
</dbReference>
<dbReference type="GO" id="GO:0042600">
    <property type="term" value="C:egg chorion"/>
    <property type="evidence" value="ECO:0007669"/>
    <property type="project" value="EnsemblMetazoa"/>
</dbReference>
<dbReference type="GO" id="GO:0005615">
    <property type="term" value="C:extracellular space"/>
    <property type="evidence" value="ECO:0000250"/>
    <property type="project" value="UniProtKB"/>
</dbReference>
<dbReference type="GO" id="GO:0060388">
    <property type="term" value="C:vitelline envelope"/>
    <property type="evidence" value="ECO:0007669"/>
    <property type="project" value="EnsemblMetazoa"/>
</dbReference>
<dbReference type="GO" id="GO:0008316">
    <property type="term" value="F:structural constituent of vitelline membrane"/>
    <property type="evidence" value="ECO:0000250"/>
    <property type="project" value="UniProtKB"/>
</dbReference>
<dbReference type="GO" id="GO:0007305">
    <property type="term" value="P:vitelline membrane formation involved in chorion-containing eggshell formation"/>
    <property type="evidence" value="ECO:0000250"/>
    <property type="project" value="UniProtKB"/>
</dbReference>
<dbReference type="InterPro" id="IPR013135">
    <property type="entry name" value="Vitelline_membr_Cys-rich-dom"/>
</dbReference>
<dbReference type="Pfam" id="PF10542">
    <property type="entry name" value="Vitelline_membr"/>
    <property type="match status" value="1"/>
</dbReference>
<dbReference type="PROSITE" id="PS51137">
    <property type="entry name" value="VM"/>
    <property type="match status" value="1"/>
</dbReference>
<evidence type="ECO:0000250" key="1">
    <source>
        <dbReference type="UniProtKB" id="Q9VKI3"/>
    </source>
</evidence>
<evidence type="ECO:0000255" key="2"/>
<evidence type="ECO:0000255" key="3">
    <source>
        <dbReference type="PROSITE-ProRule" id="PRU00483"/>
    </source>
</evidence>
<evidence type="ECO:0000305" key="4"/>
<evidence type="ECO:0000312" key="5">
    <source>
        <dbReference type="EMBL" id="ABO71724.1"/>
    </source>
</evidence>
<evidence type="ECO:0000312" key="6">
    <source>
        <dbReference type="EMBL" id="EDW52575.1"/>
    </source>
</evidence>
<keyword id="KW-1185">Reference proteome</keyword>
<keyword id="KW-0964">Secreted</keyword>
<keyword id="KW-0732">Signal</keyword>
<name>VTU4_DROSE</name>
<proteinExistence type="inferred from homology"/>
<protein>
    <recommendedName>
        <fullName evidence="5">Vitelline membrane protein Vm32E</fullName>
    </recommendedName>
</protein>
<comment type="function">
    <text evidence="1">Major early eggshell protein.</text>
</comment>
<comment type="subcellular location">
    <subcellularLocation>
        <location evidence="1">Secreted</location>
    </subcellularLocation>
</comment>
<comment type="similarity">
    <text evidence="4">Belongs to the vitelline membrane family.</text>
</comment>
<organism>
    <name type="scientific">Drosophila sechellia</name>
    <name type="common">Fruit fly</name>
    <dbReference type="NCBI Taxonomy" id="7238"/>
    <lineage>
        <taxon>Eukaryota</taxon>
        <taxon>Metazoa</taxon>
        <taxon>Ecdysozoa</taxon>
        <taxon>Arthropoda</taxon>
        <taxon>Hexapoda</taxon>
        <taxon>Insecta</taxon>
        <taxon>Pterygota</taxon>
        <taxon>Neoptera</taxon>
        <taxon>Endopterygota</taxon>
        <taxon>Diptera</taxon>
        <taxon>Brachycera</taxon>
        <taxon>Muscomorpha</taxon>
        <taxon>Ephydroidea</taxon>
        <taxon>Drosophilidae</taxon>
        <taxon>Drosophila</taxon>
        <taxon>Sophophora</taxon>
    </lineage>
</organism>
<reference evidence="5" key="1">
    <citation type="journal article" date="2007" name="Mol. Biol. Evol.">
        <title>Rapid evolution of outer egg membrane proteins in the Drosophila melanogaster subgroup: a case of ecologically driven evolution of female reproductive traits.</title>
        <authorList>
            <person name="Jagadeeshan S."/>
            <person name="Singh R.S."/>
        </authorList>
    </citation>
    <scope>NUCLEOTIDE SEQUENCE [GENOMIC DNA]</scope>
</reference>
<reference evidence="6" key="2">
    <citation type="journal article" date="2007" name="Nature">
        <title>Evolution of genes and genomes on the Drosophila phylogeny.</title>
        <authorList>
            <consortium name="Drosophila 12 genomes consortium"/>
        </authorList>
    </citation>
    <scope>NUCLEOTIDE SEQUENCE [LARGE SCALE GENOMIC DNA]</scope>
    <source>
        <strain evidence="6">Rob3c / Tucson 14021-0248.25</strain>
    </source>
</reference>
<accession>A4UM15</accession>
<feature type="signal peptide" evidence="2">
    <location>
        <begin position="1"/>
        <end position="17"/>
    </location>
</feature>
<feature type="chain" id="PRO_0000398799" description="Vitelline membrane protein Vm32E" evidence="2">
    <location>
        <begin position="18"/>
        <end position="118"/>
    </location>
</feature>
<feature type="domain" description="VM" evidence="3">
    <location>
        <begin position="36"/>
        <end position="75"/>
    </location>
</feature>
<gene>
    <name evidence="5" type="primary">Vm32E</name>
    <name type="ORF">GM11107</name>
</gene>